<organism>
    <name type="scientific">Canis lupus familiaris</name>
    <name type="common">Dog</name>
    <name type="synonym">Canis familiaris</name>
    <dbReference type="NCBI Taxonomy" id="9615"/>
    <lineage>
        <taxon>Eukaryota</taxon>
        <taxon>Metazoa</taxon>
        <taxon>Chordata</taxon>
        <taxon>Craniata</taxon>
        <taxon>Vertebrata</taxon>
        <taxon>Euteleostomi</taxon>
        <taxon>Mammalia</taxon>
        <taxon>Eutheria</taxon>
        <taxon>Laurasiatheria</taxon>
        <taxon>Carnivora</taxon>
        <taxon>Caniformia</taxon>
        <taxon>Canidae</taxon>
        <taxon>Canis</taxon>
    </lineage>
</organism>
<sequence length="129" mass="14471">KIFSKCELARKLKSMGMDGFHGYSLANWVCMAEYESNFNTQAFNGRNSNGSSDYGIFQLNSKWWCKSNSHSSANACNIMCSKFLDDNIDDDIACAKRVVKDPNGMSAWVAWVKHCKGKDLSKYLASCNL</sequence>
<evidence type="ECO:0000250" key="1"/>
<evidence type="ECO:0000255" key="2">
    <source>
        <dbReference type="PROSITE-ProRule" id="PRU00680"/>
    </source>
</evidence>
<evidence type="ECO:0000269" key="3">
    <source ref="3"/>
</evidence>
<evidence type="ECO:0007744" key="4">
    <source>
        <dbReference type="PDB" id="1EL1"/>
    </source>
</evidence>
<evidence type="ECO:0007829" key="5">
    <source>
        <dbReference type="PDB" id="1EL1"/>
    </source>
</evidence>
<evidence type="ECO:0007829" key="6">
    <source>
        <dbReference type="PDB" id="1I56"/>
    </source>
</evidence>
<evidence type="ECO:0007829" key="7">
    <source>
        <dbReference type="PDB" id="1QQY"/>
    </source>
</evidence>
<evidence type="ECO:0007829" key="8">
    <source>
        <dbReference type="PDB" id="2Z2E"/>
    </source>
</evidence>
<dbReference type="EC" id="3.2.1.17"/>
<dbReference type="PIR" id="S48641">
    <property type="entry name" value="S48641"/>
</dbReference>
<dbReference type="PDB" id="1EL1">
    <property type="method" value="X-ray"/>
    <property type="resolution" value="1.90 A"/>
    <property type="chains" value="A/B=1-129"/>
</dbReference>
<dbReference type="PDB" id="1I56">
    <property type="method" value="NMR"/>
    <property type="chains" value="A=1-129"/>
</dbReference>
<dbReference type="PDB" id="1QQY">
    <property type="method" value="X-ray"/>
    <property type="resolution" value="1.85 A"/>
    <property type="chains" value="A=1-129"/>
</dbReference>
<dbReference type="PDB" id="2CWI">
    <property type="method" value="X-ray"/>
    <property type="resolution" value="1.94 A"/>
    <property type="chains" value="A/B=1-129"/>
</dbReference>
<dbReference type="PDB" id="2Z2E">
    <property type="method" value="X-ray"/>
    <property type="resolution" value="2.01 A"/>
    <property type="chains" value="A/B=1-129"/>
</dbReference>
<dbReference type="PDBsum" id="1EL1"/>
<dbReference type="PDBsum" id="1I56"/>
<dbReference type="PDBsum" id="1QQY"/>
<dbReference type="PDBsum" id="2CWI"/>
<dbReference type="PDBsum" id="2Z2E"/>
<dbReference type="BMRB" id="P81708"/>
<dbReference type="SMR" id="P81708"/>
<dbReference type="FunCoup" id="P81708">
    <property type="interactions" value="7"/>
</dbReference>
<dbReference type="STRING" id="9615.ENSCAFP00000013141"/>
<dbReference type="CAZy" id="GH22">
    <property type="family name" value="Glycoside Hydrolase Family 22"/>
</dbReference>
<dbReference type="PaxDb" id="9612-ENSCAFP00000013141"/>
<dbReference type="eggNOG" id="ENOG502S1S1">
    <property type="taxonomic scope" value="Eukaryota"/>
</dbReference>
<dbReference type="InParanoid" id="P81708"/>
<dbReference type="EvolutionaryTrace" id="P81708"/>
<dbReference type="Proteomes" id="UP000002254">
    <property type="component" value="Unplaced"/>
</dbReference>
<dbReference type="Proteomes" id="UP000694429">
    <property type="component" value="Unplaced"/>
</dbReference>
<dbReference type="Proteomes" id="UP000694542">
    <property type="component" value="Unplaced"/>
</dbReference>
<dbReference type="Proteomes" id="UP000805418">
    <property type="component" value="Unplaced"/>
</dbReference>
<dbReference type="GO" id="GO:0003796">
    <property type="term" value="F:lysozyme activity"/>
    <property type="evidence" value="ECO:0000318"/>
    <property type="project" value="GO_Central"/>
</dbReference>
<dbReference type="GO" id="GO:0046872">
    <property type="term" value="F:metal ion binding"/>
    <property type="evidence" value="ECO:0007669"/>
    <property type="project" value="UniProtKB-KW"/>
</dbReference>
<dbReference type="GO" id="GO:0042742">
    <property type="term" value="P:defense response to bacterium"/>
    <property type="evidence" value="ECO:0007669"/>
    <property type="project" value="UniProtKB-KW"/>
</dbReference>
<dbReference type="GO" id="GO:0031640">
    <property type="term" value="P:killing of cells of another organism"/>
    <property type="evidence" value="ECO:0007669"/>
    <property type="project" value="UniProtKB-KW"/>
</dbReference>
<dbReference type="CDD" id="cd16897">
    <property type="entry name" value="LYZ_C"/>
    <property type="match status" value="1"/>
</dbReference>
<dbReference type="FunFam" id="1.10.530.10:FF:000001">
    <property type="entry name" value="Lysozyme C"/>
    <property type="match status" value="1"/>
</dbReference>
<dbReference type="Gene3D" id="1.10.530.10">
    <property type="match status" value="1"/>
</dbReference>
<dbReference type="InterPro" id="IPR001916">
    <property type="entry name" value="Glyco_hydro_22"/>
</dbReference>
<dbReference type="InterPro" id="IPR019799">
    <property type="entry name" value="Glyco_hydro_22_CS"/>
</dbReference>
<dbReference type="InterPro" id="IPR000974">
    <property type="entry name" value="Glyco_hydro_22_lys"/>
</dbReference>
<dbReference type="InterPro" id="IPR023346">
    <property type="entry name" value="Lysozyme-like_dom_sf"/>
</dbReference>
<dbReference type="PANTHER" id="PTHR11407">
    <property type="entry name" value="LYSOZYME C"/>
    <property type="match status" value="1"/>
</dbReference>
<dbReference type="PANTHER" id="PTHR11407:SF69">
    <property type="entry name" value="LYSOZYME C, MILK ISOZYME"/>
    <property type="match status" value="1"/>
</dbReference>
<dbReference type="Pfam" id="PF00062">
    <property type="entry name" value="Lys"/>
    <property type="match status" value="1"/>
</dbReference>
<dbReference type="PRINTS" id="PR00137">
    <property type="entry name" value="LYSOZYME"/>
</dbReference>
<dbReference type="PRINTS" id="PR00135">
    <property type="entry name" value="LYZLACT"/>
</dbReference>
<dbReference type="SMART" id="SM00263">
    <property type="entry name" value="LYZ1"/>
    <property type="match status" value="1"/>
</dbReference>
<dbReference type="SUPFAM" id="SSF53955">
    <property type="entry name" value="Lysozyme-like"/>
    <property type="match status" value="1"/>
</dbReference>
<dbReference type="PROSITE" id="PS00128">
    <property type="entry name" value="GLYCOSYL_HYDROL_F22_1"/>
    <property type="match status" value="1"/>
</dbReference>
<dbReference type="PROSITE" id="PS51348">
    <property type="entry name" value="GLYCOSYL_HYDROL_F22_2"/>
    <property type="match status" value="1"/>
</dbReference>
<protein>
    <recommendedName>
        <fullName>Lysozyme C, milk isozyme</fullName>
        <ecNumber>3.2.1.17</ecNumber>
    </recommendedName>
    <alternativeName>
        <fullName>1,4-beta-N-acetylmuramidase C</fullName>
    </alternativeName>
</protein>
<name>LYSC1_CANLF</name>
<accession>P81708</accession>
<comment type="function">
    <text evidence="2">Lysozymes have primarily a bacteriolytic function; those in tissues and body fluids are associated with the monocyte-macrophage system and enhance the activity of immunoagents.</text>
</comment>
<comment type="catalytic activity">
    <reaction>
        <text>Hydrolysis of (1-&gt;4)-beta-linkages between N-acetylmuramic acid and N-acetyl-D-glucosamine residues in a peptidoglycan and between N-acetyl-D-glucosamine residues in chitodextrins.</text>
        <dbReference type="EC" id="3.2.1.17"/>
    </reaction>
</comment>
<comment type="cofactor">
    <cofactor>
        <name>Ca(2+)</name>
        <dbReference type="ChEBI" id="CHEBI:29108"/>
    </cofactor>
    <text evidence="3">Binds 1 Ca(2+) ion per subunit.</text>
</comment>
<comment type="subunit">
    <text evidence="1">Monomer.</text>
</comment>
<comment type="miscellaneous">
    <text evidence="1">Lysozyme C is capable of both hydrolysis and transglycosylation; it also shows a slight esterase activity. It acts rapidly on both peptide-substituted and unsubstituted peptidoglycan, and slowly on chitin oligosaccharides (By similarity).</text>
</comment>
<comment type="similarity">
    <text evidence="2">Belongs to the glycosyl hydrolase 22 family.</text>
</comment>
<reference key="1">
    <citation type="journal article" date="1994" name="Arch. Biochem. Biophys.">
        <title>Sequences of two highly divergent canine type c lysozymes: implications for the evolutionary origins of the lysozyme/alpha-lactalbumin superfamily.</title>
        <authorList>
            <person name="Grobler J.A."/>
            <person name="Rao K.R."/>
            <person name="Pervaiz S."/>
            <person name="Brew K."/>
        </authorList>
    </citation>
    <scope>PROTEIN SEQUENCE</scope>
    <source>
        <tissue>Milk</tissue>
    </source>
</reference>
<reference key="2">
    <citation type="journal article" date="2000" name="Biochemistry">
        <title>Structure and thermodynamics of the extraordinarily stable molten globule state of canine milk lysozyme.</title>
        <authorList>
            <person name="Koshiba T."/>
            <person name="Yao M."/>
            <person name="Kobashigawa Y."/>
            <person name="Demura M."/>
            <person name="Nakagawa A."/>
            <person name="Tanaka I."/>
            <person name="Kuwajima K."/>
            <person name="Nitta K."/>
        </authorList>
    </citation>
    <scope>X-RAY CRYSTALLOGRAPHY (1.85 ANGSTROMS)</scope>
    <scope>DISULFIDE BONDS</scope>
</reference>
<reference evidence="4" key="3">
    <citation type="submission" date="2000-03" db="PDB data bank">
        <title>Calcium Induced Conformational Changes of Canine Milk Lysozyme Revealed by Structural and Thermodynamical Evidences.</title>
        <authorList>
            <person name="Koshiba T."/>
            <person name="Yao M."/>
            <person name="Tanaka I."/>
            <person name="Nitta K."/>
        </authorList>
    </citation>
    <scope>X-RAY CRYSTALLOGRAPHY (1.90 ANGSTROMS) IN COMPLEX WITH CALCIUM</scope>
</reference>
<reference key="4">
    <citation type="journal article" date="2010" name="J. Mol. Biol.">
        <title>Different folding pathways taken by highly homologous proteins, goat alpha-lactalbumin and canine milk lysozyme.</title>
        <authorList>
            <person name="Nakamura T."/>
            <person name="Makabe K."/>
            <person name="Tomoyori K."/>
            <person name="Maki K."/>
            <person name="Mukaiyama A."/>
            <person name="Kuwajima K."/>
        </authorList>
    </citation>
    <scope>X-RAY CRYSTALLOGRAPHY (1.9 ANGSTROMS)</scope>
    <scope>CALCIUM-BINDING REGION</scope>
    <scope>DISULFIDE BONDS</scope>
</reference>
<proteinExistence type="evidence at protein level"/>
<feature type="chain" id="PRO_0000208845" description="Lysozyme C, milk isozyme">
    <location>
        <begin position="1"/>
        <end position="129"/>
    </location>
</feature>
<feature type="domain" description="C-type lysozyme" evidence="2">
    <location>
        <begin position="1"/>
        <end position="129"/>
    </location>
</feature>
<feature type="active site" evidence="2">
    <location>
        <position position="35"/>
    </location>
</feature>
<feature type="active site" evidence="2">
    <location>
        <position position="53"/>
    </location>
</feature>
<feature type="binding site" evidence="4">
    <location>
        <position position="82"/>
    </location>
    <ligand>
        <name>Ca(2+)</name>
        <dbReference type="ChEBI" id="CHEBI:29108"/>
    </ligand>
</feature>
<feature type="binding site" evidence="4">
    <location>
        <position position="85"/>
    </location>
    <ligand>
        <name>Ca(2+)</name>
        <dbReference type="ChEBI" id="CHEBI:29108"/>
    </ligand>
</feature>
<feature type="binding site" evidence="4">
    <location>
        <position position="87"/>
    </location>
    <ligand>
        <name>Ca(2+)</name>
        <dbReference type="ChEBI" id="CHEBI:29108"/>
    </ligand>
</feature>
<feature type="binding site" evidence="4">
    <location>
        <position position="90"/>
    </location>
    <ligand>
        <name>Ca(2+)</name>
        <dbReference type="ChEBI" id="CHEBI:29108"/>
    </ligand>
</feature>
<feature type="binding site" evidence="4">
    <location>
        <position position="91"/>
    </location>
    <ligand>
        <name>Ca(2+)</name>
        <dbReference type="ChEBI" id="CHEBI:29108"/>
    </ligand>
</feature>
<feature type="disulfide bond">
    <location>
        <begin position="6"/>
        <end position="127"/>
    </location>
</feature>
<feature type="disulfide bond">
    <location>
        <begin position="30"/>
        <end position="115"/>
    </location>
</feature>
<feature type="disulfide bond">
    <location>
        <begin position="65"/>
        <end position="80"/>
    </location>
</feature>
<feature type="disulfide bond">
    <location>
        <begin position="76"/>
        <end position="94"/>
    </location>
</feature>
<feature type="helix" evidence="7">
    <location>
        <begin position="5"/>
        <end position="14"/>
    </location>
</feature>
<feature type="helix" evidence="7">
    <location>
        <begin position="25"/>
        <end position="36"/>
    </location>
</feature>
<feature type="strand" evidence="7">
    <location>
        <begin position="43"/>
        <end position="46"/>
    </location>
</feature>
<feature type="strand" evidence="7">
    <location>
        <begin position="48"/>
        <end position="50"/>
    </location>
</feature>
<feature type="strand" evidence="8">
    <location>
        <begin position="52"/>
        <end position="54"/>
    </location>
</feature>
<feature type="turn" evidence="7">
    <location>
        <begin position="55"/>
        <end position="58"/>
    </location>
</feature>
<feature type="turn" evidence="7">
    <location>
        <begin position="61"/>
        <end position="64"/>
    </location>
</feature>
<feature type="strand" evidence="5">
    <location>
        <begin position="68"/>
        <end position="70"/>
    </location>
</feature>
<feature type="helix" evidence="7">
    <location>
        <begin position="80"/>
        <end position="84"/>
    </location>
</feature>
<feature type="helix" evidence="7">
    <location>
        <begin position="89"/>
        <end position="98"/>
    </location>
</feature>
<feature type="strand" evidence="6">
    <location>
        <begin position="101"/>
        <end position="103"/>
    </location>
</feature>
<feature type="helix" evidence="7">
    <location>
        <begin position="104"/>
        <end position="107"/>
    </location>
</feature>
<feature type="helix" evidence="7">
    <location>
        <begin position="109"/>
        <end position="114"/>
    </location>
</feature>
<feature type="turn" evidence="7">
    <location>
        <begin position="115"/>
        <end position="117"/>
    </location>
</feature>
<feature type="turn" evidence="7">
    <location>
        <begin position="121"/>
        <end position="126"/>
    </location>
</feature>
<keyword id="KW-0002">3D-structure</keyword>
<keyword id="KW-0929">Antimicrobial</keyword>
<keyword id="KW-0081">Bacteriolytic enzyme</keyword>
<keyword id="KW-0106">Calcium</keyword>
<keyword id="KW-0903">Direct protein sequencing</keyword>
<keyword id="KW-1015">Disulfide bond</keyword>
<keyword id="KW-0326">Glycosidase</keyword>
<keyword id="KW-0378">Hydrolase</keyword>
<keyword id="KW-0479">Metal-binding</keyword>
<keyword id="KW-0494">Milk protein</keyword>
<keyword id="KW-1185">Reference proteome</keyword>